<accession>P81171</accession>
<accession>Q9ZDY9</accession>
<name>Y174_RICPR</name>
<gene>
    <name type="ordered locus">RP174</name>
</gene>
<keyword id="KW-0378">Hydrolase</keyword>
<keyword id="KW-0645">Protease</keyword>
<keyword id="KW-1185">Reference proteome</keyword>
<keyword id="KW-0720">Serine protease</keyword>
<protein>
    <recommendedName>
        <fullName>Uncharacterized peptidase RP174</fullName>
        <ecNumber>3.4.21.-</ecNumber>
    </recommendedName>
</protein>
<feature type="chain" id="PRO_0000122426" description="Uncharacterized peptidase RP174">
    <location>
        <begin position="1"/>
        <end position="722"/>
    </location>
</feature>
<feature type="active site" description="Charge relay system" evidence="1">
    <location>
        <position position="575"/>
    </location>
</feature>
<feature type="active site" description="Charge relay system" evidence="1">
    <location>
        <position position="658"/>
    </location>
</feature>
<feature type="active site" description="Charge relay system" evidence="1">
    <location>
        <position position="691"/>
    </location>
</feature>
<comment type="similarity">
    <text evidence="2">Belongs to the peptidase S9B family.</text>
</comment>
<dbReference type="EC" id="3.4.21.-"/>
<dbReference type="EMBL" id="AJ235270">
    <property type="protein sequence ID" value="CAA14641.1"/>
    <property type="molecule type" value="Genomic_DNA"/>
</dbReference>
<dbReference type="PIR" id="B71728">
    <property type="entry name" value="B71728"/>
</dbReference>
<dbReference type="RefSeq" id="NP_220564.1">
    <property type="nucleotide sequence ID" value="NC_000963.1"/>
</dbReference>
<dbReference type="RefSeq" id="WP_004595908.1">
    <property type="nucleotide sequence ID" value="NC_000963.1"/>
</dbReference>
<dbReference type="SMR" id="P81171"/>
<dbReference type="STRING" id="272947.gene:17555257"/>
<dbReference type="ESTHER" id="ricpr-y174">
    <property type="family name" value="S9N_PPCE_Peptidase_S9"/>
</dbReference>
<dbReference type="EnsemblBacteria" id="CAA14641">
    <property type="protein sequence ID" value="CAA14641"/>
    <property type="gene ID" value="CAA14641"/>
</dbReference>
<dbReference type="KEGG" id="rpr:RP174"/>
<dbReference type="PATRIC" id="fig|272947.5.peg.179"/>
<dbReference type="eggNOG" id="COG1505">
    <property type="taxonomic scope" value="Bacteria"/>
</dbReference>
<dbReference type="HOGENOM" id="CLU_011290_4_0_5"/>
<dbReference type="OrthoDB" id="9801421at2"/>
<dbReference type="Proteomes" id="UP000002480">
    <property type="component" value="Chromosome"/>
</dbReference>
<dbReference type="GO" id="GO:0005829">
    <property type="term" value="C:cytosol"/>
    <property type="evidence" value="ECO:0007669"/>
    <property type="project" value="TreeGrafter"/>
</dbReference>
<dbReference type="GO" id="GO:0070012">
    <property type="term" value="F:oligopeptidase activity"/>
    <property type="evidence" value="ECO:0007669"/>
    <property type="project" value="TreeGrafter"/>
</dbReference>
<dbReference type="GO" id="GO:0004252">
    <property type="term" value="F:serine-type endopeptidase activity"/>
    <property type="evidence" value="ECO:0007669"/>
    <property type="project" value="InterPro"/>
</dbReference>
<dbReference type="GO" id="GO:0006508">
    <property type="term" value="P:proteolysis"/>
    <property type="evidence" value="ECO:0007669"/>
    <property type="project" value="UniProtKB-KW"/>
</dbReference>
<dbReference type="Gene3D" id="3.40.50.1820">
    <property type="entry name" value="alpha/beta hydrolase"/>
    <property type="match status" value="1"/>
</dbReference>
<dbReference type="Gene3D" id="2.130.10.120">
    <property type="entry name" value="Prolyl oligopeptidase, N-terminal domain"/>
    <property type="match status" value="1"/>
</dbReference>
<dbReference type="InterPro" id="IPR029058">
    <property type="entry name" value="AB_hydrolase_fold"/>
</dbReference>
<dbReference type="InterPro" id="IPR023302">
    <property type="entry name" value="Pept_S9A_N"/>
</dbReference>
<dbReference type="InterPro" id="IPR001375">
    <property type="entry name" value="Peptidase_S9_cat"/>
</dbReference>
<dbReference type="InterPro" id="IPR002470">
    <property type="entry name" value="Peptidase_S9A"/>
</dbReference>
<dbReference type="InterPro" id="IPR051167">
    <property type="entry name" value="Prolyl_oligopep/macrocyclase"/>
</dbReference>
<dbReference type="PANTHER" id="PTHR42881">
    <property type="entry name" value="PROLYL ENDOPEPTIDASE"/>
    <property type="match status" value="1"/>
</dbReference>
<dbReference type="PANTHER" id="PTHR42881:SF13">
    <property type="entry name" value="PROLYL ENDOPEPTIDASE"/>
    <property type="match status" value="1"/>
</dbReference>
<dbReference type="Pfam" id="PF00326">
    <property type="entry name" value="Peptidase_S9"/>
    <property type="match status" value="1"/>
</dbReference>
<dbReference type="Pfam" id="PF02897">
    <property type="entry name" value="Peptidase_S9_N"/>
    <property type="match status" value="1"/>
</dbReference>
<dbReference type="PRINTS" id="PR00862">
    <property type="entry name" value="PROLIGOPTASE"/>
</dbReference>
<dbReference type="SUPFAM" id="SSF53474">
    <property type="entry name" value="alpha/beta-Hydrolases"/>
    <property type="match status" value="1"/>
</dbReference>
<dbReference type="SUPFAM" id="SSF50993">
    <property type="entry name" value="Peptidase/esterase 'gauge' domain"/>
    <property type="match status" value="1"/>
</dbReference>
<sequence>MKKIICYFTIILLTFGIDAMEDNNKQIYNPKETKFLEEAAGAEALKWAKERTNKTEKALQAMQEYKRIKKEIESIFYDQRKTLYGVIRKGYVYNFWMDDKNPQGLWRRTLVDNYYKDKPNWEVLIDFDKLSKKIGKKVAYRGVSNCVQNPNRYLISMSFGGKDEMFFREWDLEKKDFVKNGFEPITSCGKLLEGKFTYPTWVNKDTIIFNPVLYKDEITSSLYPNSLYIWKRGEAIEKARKLFEVPKEYIRVSADKLLSDAISSSLIFISADKDFYNYDNYILDTQDKNFKLQKINMPSDATLQGSFKEYVFWLLRSDWKFKNHNIKAGSLVALHFTDLLKAESDKTSLKILFTPTENEVFNFIGTTKDRVFLATYDNVVSKVVTFTLENEQWTKPVILKLPYQNAIFRMSSYEDEEEALITIENAIVPPTIYLWVKTHELKVIRKALYSFDSENYVLEQKEATSFDGVKIPYFIVYKKGIKFDGKNPTLLEAYGGFQVINSPYFSRIKNEVWVKNGGVSVLANIRGGGEFGPEWHKAAQGIKRQTAFNDFFAVSEELIKQNITSPEYLGIKGGSNGGLLVSVAMTQRPELFGAIACEVPILDMIRYKEFGAGNSWVTEYGDPEIPNDLLHIKKYAPLENLSLTQKYPTVLITDSVLDQRVHPWHGRIFEYVLAQNPNTKTYFLESRDSGHSSGSDLKESANYFINLYTFFANTLKLKLIKF</sequence>
<organism>
    <name type="scientific">Rickettsia prowazekii (strain Madrid E)</name>
    <dbReference type="NCBI Taxonomy" id="272947"/>
    <lineage>
        <taxon>Bacteria</taxon>
        <taxon>Pseudomonadati</taxon>
        <taxon>Pseudomonadota</taxon>
        <taxon>Alphaproteobacteria</taxon>
        <taxon>Rickettsiales</taxon>
        <taxon>Rickettsiaceae</taxon>
        <taxon>Rickettsieae</taxon>
        <taxon>Rickettsia</taxon>
        <taxon>typhus group</taxon>
    </lineage>
</organism>
<reference key="1">
    <citation type="journal article" date="1998" name="Nature">
        <title>The genome sequence of Rickettsia prowazekii and the origin of mitochondria.</title>
        <authorList>
            <person name="Andersson S.G.E."/>
            <person name="Zomorodipour A."/>
            <person name="Andersson J.O."/>
            <person name="Sicheritz-Ponten T."/>
            <person name="Alsmark U.C.M."/>
            <person name="Podowski R.M."/>
            <person name="Naeslund A.K."/>
            <person name="Eriksson A.-S."/>
            <person name="Winkler H.H."/>
            <person name="Kurland C.G."/>
        </authorList>
    </citation>
    <scope>NUCLEOTIDE SEQUENCE [LARGE SCALE GENOMIC DNA]</scope>
    <source>
        <strain>Madrid E</strain>
    </source>
</reference>
<proteinExistence type="inferred from homology"/>
<evidence type="ECO:0000250" key="1"/>
<evidence type="ECO:0000305" key="2"/>